<name>RPPH_BURPS</name>
<accession>Q63QM4</accession>
<feature type="chain" id="PRO_0000231902" description="RNA pyrophosphohydrolase">
    <location>
        <begin position="1"/>
        <end position="216"/>
    </location>
</feature>
<feature type="domain" description="Nudix hydrolase" evidence="1">
    <location>
        <begin position="6"/>
        <end position="149"/>
    </location>
</feature>
<feature type="region of interest" description="Disordered" evidence="2">
    <location>
        <begin position="159"/>
        <end position="188"/>
    </location>
</feature>
<feature type="short sequence motif" description="Nudix box">
    <location>
        <begin position="38"/>
        <end position="59"/>
    </location>
</feature>
<protein>
    <recommendedName>
        <fullName evidence="1">RNA pyrophosphohydrolase</fullName>
        <ecNumber evidence="1">3.6.1.-</ecNumber>
    </recommendedName>
    <alternativeName>
        <fullName evidence="1">(Di)nucleoside polyphosphate hydrolase</fullName>
    </alternativeName>
</protein>
<sequence>MLDREGFRPNVGIILLNAHNEVFWGKRLREHSWQFPQGGIKYGETPMQAMYRELHEETGLLPEHVKIIGRTRDWLRYEVPDKFIKREVRGHYRGQKQIWFLLRMVGRDCDICLRATDHPEFDAWRWNEYWVPLDAVIEFKRDVYQLALTELSRFLRRPAQRTDKSRGPRAPRYPRVANGHAASEAPAAIDTSAVCSEVEPGANALDETPPRVSLRD</sequence>
<evidence type="ECO:0000255" key="1">
    <source>
        <dbReference type="HAMAP-Rule" id="MF_00298"/>
    </source>
</evidence>
<evidence type="ECO:0000256" key="2">
    <source>
        <dbReference type="SAM" id="MobiDB-lite"/>
    </source>
</evidence>
<organism>
    <name type="scientific">Burkholderia pseudomallei (strain K96243)</name>
    <dbReference type="NCBI Taxonomy" id="272560"/>
    <lineage>
        <taxon>Bacteria</taxon>
        <taxon>Pseudomonadati</taxon>
        <taxon>Pseudomonadota</taxon>
        <taxon>Betaproteobacteria</taxon>
        <taxon>Burkholderiales</taxon>
        <taxon>Burkholderiaceae</taxon>
        <taxon>Burkholderia</taxon>
        <taxon>pseudomallei group</taxon>
    </lineage>
</organism>
<comment type="function">
    <text evidence="1">Accelerates the degradation of transcripts by removing pyrophosphate from the 5'-end of triphosphorylated RNA, leading to a more labile monophosphorylated state that can stimulate subsequent ribonuclease cleavage.</text>
</comment>
<comment type="cofactor">
    <cofactor evidence="1">
        <name>a divalent metal cation</name>
        <dbReference type="ChEBI" id="CHEBI:60240"/>
    </cofactor>
</comment>
<comment type="similarity">
    <text evidence="1">Belongs to the Nudix hydrolase family. RppH subfamily.</text>
</comment>
<reference key="1">
    <citation type="journal article" date="2004" name="Proc. Natl. Acad. Sci. U.S.A.">
        <title>Genomic plasticity of the causative agent of melioidosis, Burkholderia pseudomallei.</title>
        <authorList>
            <person name="Holden M.T.G."/>
            <person name="Titball R.W."/>
            <person name="Peacock S.J."/>
            <person name="Cerdeno-Tarraga A.-M."/>
            <person name="Atkins T."/>
            <person name="Crossman L.C."/>
            <person name="Pitt T."/>
            <person name="Churcher C."/>
            <person name="Mungall K.L."/>
            <person name="Bentley S.D."/>
            <person name="Sebaihia M."/>
            <person name="Thomson N.R."/>
            <person name="Bason N."/>
            <person name="Beacham I.R."/>
            <person name="Brooks K."/>
            <person name="Brown K.A."/>
            <person name="Brown N.F."/>
            <person name="Challis G.L."/>
            <person name="Cherevach I."/>
            <person name="Chillingworth T."/>
            <person name="Cronin A."/>
            <person name="Crossett B."/>
            <person name="Davis P."/>
            <person name="DeShazer D."/>
            <person name="Feltwell T."/>
            <person name="Fraser A."/>
            <person name="Hance Z."/>
            <person name="Hauser H."/>
            <person name="Holroyd S."/>
            <person name="Jagels K."/>
            <person name="Keith K.E."/>
            <person name="Maddison M."/>
            <person name="Moule S."/>
            <person name="Price C."/>
            <person name="Quail M.A."/>
            <person name="Rabbinowitsch E."/>
            <person name="Rutherford K."/>
            <person name="Sanders M."/>
            <person name="Simmonds M."/>
            <person name="Songsivilai S."/>
            <person name="Stevens K."/>
            <person name="Tumapa S."/>
            <person name="Vesaratchavest M."/>
            <person name="Whitehead S."/>
            <person name="Yeats C."/>
            <person name="Barrell B.G."/>
            <person name="Oyston P.C.F."/>
            <person name="Parkhill J."/>
        </authorList>
    </citation>
    <scope>NUCLEOTIDE SEQUENCE [LARGE SCALE GENOMIC DNA]</scope>
    <source>
        <strain>K96243</strain>
    </source>
</reference>
<keyword id="KW-0378">Hydrolase</keyword>
<keyword id="KW-1185">Reference proteome</keyword>
<dbReference type="EC" id="3.6.1.-" evidence="1"/>
<dbReference type="EMBL" id="BX571965">
    <property type="protein sequence ID" value="CAH37010.1"/>
    <property type="molecule type" value="Genomic_DNA"/>
</dbReference>
<dbReference type="RefSeq" id="WP_004194263.1">
    <property type="nucleotide sequence ID" value="NZ_CP009538.1"/>
</dbReference>
<dbReference type="RefSeq" id="YP_109594.1">
    <property type="nucleotide sequence ID" value="NC_006350.1"/>
</dbReference>
<dbReference type="SMR" id="Q63QM4"/>
<dbReference type="STRING" id="272560.BPSL2999"/>
<dbReference type="KEGG" id="bps:BPSL2999"/>
<dbReference type="PATRIC" id="fig|272560.51.peg.2271"/>
<dbReference type="eggNOG" id="COG0494">
    <property type="taxonomic scope" value="Bacteria"/>
</dbReference>
<dbReference type="Proteomes" id="UP000000605">
    <property type="component" value="Chromosome 1"/>
</dbReference>
<dbReference type="GO" id="GO:0016462">
    <property type="term" value="F:pyrophosphatase activity"/>
    <property type="evidence" value="ECO:0007669"/>
    <property type="project" value="UniProtKB-ARBA"/>
</dbReference>
<dbReference type="CDD" id="cd03671">
    <property type="entry name" value="NUDIX_Ap4A_hydrolase_plant_like"/>
    <property type="match status" value="1"/>
</dbReference>
<dbReference type="Gene3D" id="3.90.79.10">
    <property type="entry name" value="Nucleoside Triphosphate Pyrophosphohydrolase"/>
    <property type="match status" value="1"/>
</dbReference>
<dbReference type="HAMAP" id="MF_00298">
    <property type="entry name" value="Nudix_RppH"/>
    <property type="match status" value="1"/>
</dbReference>
<dbReference type="InterPro" id="IPR020476">
    <property type="entry name" value="Nudix_hydrolase"/>
</dbReference>
<dbReference type="InterPro" id="IPR015797">
    <property type="entry name" value="NUDIX_hydrolase-like_dom_sf"/>
</dbReference>
<dbReference type="InterPro" id="IPR020084">
    <property type="entry name" value="NUDIX_hydrolase_CS"/>
</dbReference>
<dbReference type="InterPro" id="IPR000086">
    <property type="entry name" value="NUDIX_hydrolase_dom"/>
</dbReference>
<dbReference type="InterPro" id="IPR022927">
    <property type="entry name" value="RppH"/>
</dbReference>
<dbReference type="NCBIfam" id="NF001935">
    <property type="entry name" value="PRK00714.1-2"/>
    <property type="match status" value="1"/>
</dbReference>
<dbReference type="NCBIfam" id="NF001937">
    <property type="entry name" value="PRK00714.1-4"/>
    <property type="match status" value="1"/>
</dbReference>
<dbReference type="NCBIfam" id="NF001938">
    <property type="entry name" value="PRK00714.1-5"/>
    <property type="match status" value="1"/>
</dbReference>
<dbReference type="PANTHER" id="PTHR43736">
    <property type="entry name" value="ADP-RIBOSE PYROPHOSPHATASE"/>
    <property type="match status" value="1"/>
</dbReference>
<dbReference type="PANTHER" id="PTHR43736:SF1">
    <property type="entry name" value="DIHYDRONEOPTERIN TRIPHOSPHATE DIPHOSPHATASE"/>
    <property type="match status" value="1"/>
</dbReference>
<dbReference type="Pfam" id="PF00293">
    <property type="entry name" value="NUDIX"/>
    <property type="match status" value="1"/>
</dbReference>
<dbReference type="PRINTS" id="PR00502">
    <property type="entry name" value="NUDIXFAMILY"/>
</dbReference>
<dbReference type="SUPFAM" id="SSF55811">
    <property type="entry name" value="Nudix"/>
    <property type="match status" value="1"/>
</dbReference>
<dbReference type="PROSITE" id="PS51462">
    <property type="entry name" value="NUDIX"/>
    <property type="match status" value="1"/>
</dbReference>
<dbReference type="PROSITE" id="PS00893">
    <property type="entry name" value="NUDIX_BOX"/>
    <property type="match status" value="1"/>
</dbReference>
<proteinExistence type="inferred from homology"/>
<gene>
    <name evidence="1" type="primary">rppH</name>
    <name evidence="1" type="synonym">nudH</name>
    <name type="ordered locus">BPSL2999</name>
</gene>